<gene>
    <name evidence="1" type="primary">ureG</name>
</gene>
<protein>
    <recommendedName>
        <fullName evidence="1">Urease accessory protein UreG</fullName>
    </recommendedName>
</protein>
<comment type="function">
    <text evidence="1">Facilitates the functional incorporation of the urease nickel metallocenter. This process requires GTP hydrolysis, probably effectuated by UreG.</text>
</comment>
<comment type="subunit">
    <text evidence="1">Homodimer. UreD, UreF and UreG form a complex that acts as a GTP-hydrolysis-dependent molecular chaperone, activating the urease apoprotein by helping to assemble the nickel containing metallocenter of UreC. The UreE protein probably delivers the nickel.</text>
</comment>
<comment type="subcellular location">
    <subcellularLocation>
        <location evidence="1">Cytoplasm</location>
    </subcellularLocation>
</comment>
<comment type="similarity">
    <text evidence="1">Belongs to the SIMIBI class G3E GTPase family. UreG subfamily.</text>
</comment>
<reference key="1">
    <citation type="journal article" date="2002" name="Arch. Microbiol.">
        <title>Characterization of the urease gene cluster from Rhizobium leguminosarum bv. viciae.</title>
        <authorList>
            <person name="Toffanin A."/>
            <person name="Cadahia E."/>
            <person name="Imperial J."/>
            <person name="Ruiz-Argueso T."/>
            <person name="Palacios M."/>
        </authorList>
    </citation>
    <scope>NUCLEOTIDE SEQUENCE [GENOMIC DNA]</scope>
    <source>
        <strain>UPM791</strain>
    </source>
</reference>
<sequence>MKSRNGPLRVGIGGPVGSGKTALTEKLCKAMRDDYSVAVVTNDIYTTEDAEALVRMQALPSDRIVGVETGGCPHTAIREDATINLQAIAGLNQRIPDLDVVFIESGGDNLAATFSPDLADITIYVISVCQGEEIPRKGGPGITRSDLLVINKKDLAPYVGADLEVKDRDATRMRASRPFVFSDMKRGDGVSSIVSFLREQGGL</sequence>
<accession>Q8RPX7</accession>
<dbReference type="EMBL" id="AF347070">
    <property type="protein sequence ID" value="AAL83835.1"/>
    <property type="molecule type" value="Genomic_DNA"/>
</dbReference>
<dbReference type="SMR" id="Q8RPX7"/>
<dbReference type="GO" id="GO:0005737">
    <property type="term" value="C:cytoplasm"/>
    <property type="evidence" value="ECO:0007669"/>
    <property type="project" value="UniProtKB-SubCell"/>
</dbReference>
<dbReference type="GO" id="GO:0005525">
    <property type="term" value="F:GTP binding"/>
    <property type="evidence" value="ECO:0007669"/>
    <property type="project" value="UniProtKB-KW"/>
</dbReference>
<dbReference type="GO" id="GO:0003924">
    <property type="term" value="F:GTPase activity"/>
    <property type="evidence" value="ECO:0007669"/>
    <property type="project" value="InterPro"/>
</dbReference>
<dbReference type="GO" id="GO:0016151">
    <property type="term" value="F:nickel cation binding"/>
    <property type="evidence" value="ECO:0007669"/>
    <property type="project" value="UniProtKB-UniRule"/>
</dbReference>
<dbReference type="GO" id="GO:0043419">
    <property type="term" value="P:urea catabolic process"/>
    <property type="evidence" value="ECO:0007669"/>
    <property type="project" value="InterPro"/>
</dbReference>
<dbReference type="CDD" id="cd05540">
    <property type="entry name" value="UreG"/>
    <property type="match status" value="1"/>
</dbReference>
<dbReference type="FunFam" id="3.40.50.300:FF:000208">
    <property type="entry name" value="Urease accessory protein UreG"/>
    <property type="match status" value="1"/>
</dbReference>
<dbReference type="Gene3D" id="3.40.50.300">
    <property type="entry name" value="P-loop containing nucleotide triphosphate hydrolases"/>
    <property type="match status" value="1"/>
</dbReference>
<dbReference type="HAMAP" id="MF_01389">
    <property type="entry name" value="UreG"/>
    <property type="match status" value="1"/>
</dbReference>
<dbReference type="InterPro" id="IPR003495">
    <property type="entry name" value="CobW/HypB/UreG_nucleotide-bd"/>
</dbReference>
<dbReference type="InterPro" id="IPR027417">
    <property type="entry name" value="P-loop_NTPase"/>
</dbReference>
<dbReference type="InterPro" id="IPR004400">
    <property type="entry name" value="UreG"/>
</dbReference>
<dbReference type="NCBIfam" id="TIGR00101">
    <property type="entry name" value="ureG"/>
    <property type="match status" value="1"/>
</dbReference>
<dbReference type="PANTHER" id="PTHR31715">
    <property type="entry name" value="UREASE ACCESSORY PROTEIN G"/>
    <property type="match status" value="1"/>
</dbReference>
<dbReference type="PANTHER" id="PTHR31715:SF0">
    <property type="entry name" value="UREASE ACCESSORY PROTEIN G"/>
    <property type="match status" value="1"/>
</dbReference>
<dbReference type="Pfam" id="PF02492">
    <property type="entry name" value="cobW"/>
    <property type="match status" value="1"/>
</dbReference>
<dbReference type="PIRSF" id="PIRSF005624">
    <property type="entry name" value="Ni-bind_GTPase"/>
    <property type="match status" value="1"/>
</dbReference>
<dbReference type="SUPFAM" id="SSF52540">
    <property type="entry name" value="P-loop containing nucleoside triphosphate hydrolases"/>
    <property type="match status" value="1"/>
</dbReference>
<keyword id="KW-0143">Chaperone</keyword>
<keyword id="KW-0963">Cytoplasm</keyword>
<keyword id="KW-0342">GTP-binding</keyword>
<keyword id="KW-0996">Nickel insertion</keyword>
<keyword id="KW-0547">Nucleotide-binding</keyword>
<evidence type="ECO:0000255" key="1">
    <source>
        <dbReference type="HAMAP-Rule" id="MF_01389"/>
    </source>
</evidence>
<feature type="chain" id="PRO_0000347436" description="Urease accessory protein UreG">
    <location>
        <begin position="1"/>
        <end position="203"/>
    </location>
</feature>
<feature type="binding site" evidence="1">
    <location>
        <begin position="14"/>
        <end position="21"/>
    </location>
    <ligand>
        <name>GTP</name>
        <dbReference type="ChEBI" id="CHEBI:37565"/>
    </ligand>
</feature>
<proteinExistence type="inferred from homology"/>
<organism>
    <name type="scientific">Rhizobium leguminosarum bv. viciae</name>
    <dbReference type="NCBI Taxonomy" id="387"/>
    <lineage>
        <taxon>Bacteria</taxon>
        <taxon>Pseudomonadati</taxon>
        <taxon>Pseudomonadota</taxon>
        <taxon>Alphaproteobacteria</taxon>
        <taxon>Hyphomicrobiales</taxon>
        <taxon>Rhizobiaceae</taxon>
        <taxon>Rhizobium/Agrobacterium group</taxon>
        <taxon>Rhizobium</taxon>
    </lineage>
</organism>
<name>UREG_RHILV</name>